<name>REP_TYLCC</name>
<organism>
    <name type="scientific">Tomato yellow leaf curl China virus</name>
    <name type="common">TYLCCNV</name>
    <dbReference type="NCBI Taxonomy" id="185793"/>
    <lineage>
        <taxon>Viruses</taxon>
        <taxon>Monodnaviria</taxon>
        <taxon>Shotokuvirae</taxon>
        <taxon>Cressdnaviricota</taxon>
        <taxon>Repensiviricetes</taxon>
        <taxon>Geplafuvirales</taxon>
        <taxon>Geminiviridae</taxon>
        <taxon>Begomovirus</taxon>
    </lineage>
</organism>
<proteinExistence type="inferred from homology"/>
<comment type="function">
    <text evidence="1">Essential for the replication of viral ssDNA. The closed circular ssDNA genome is first converted to a superhelical dsDNA. Rep binds a specific region at the genome origin of replication. It introduces an endonucleolytic nick within the conserved sequence 5'-TAATATTAC-3' in the intergenic region of the genome present in all geminiviruses, thereby initiating the rolling circle replication (RCR). Following cleavage, binds covalently to the 5'-phosphate of DNA as a tyrosyl ester. The cleavage gives rise to a free 3'-OH that serves as a primer for the cellular DNA polymerase. The polymerase synthesizes the (+) strand DNA by rolling circle mechanism. After one round of replication, a Rep-catalyzed nucleotidyl transfer reaction releases a circular single-stranded virus genome, thereby terminating the replication. Displays origin-specific DNA cleavage, nucleotidyl transferase, ATPase and helicase activities (By similarity).</text>
</comment>
<comment type="cofactor">
    <cofactor evidence="3">
        <name>Mg(2+)</name>
        <dbReference type="ChEBI" id="CHEBI:18420"/>
    </cofactor>
    <cofactor evidence="3">
        <name>Mn(2+)</name>
        <dbReference type="ChEBI" id="CHEBI:29035"/>
    </cofactor>
    <text evidence="3">Divalent metal cations, possibly Mg(2+) or Mn(2+).</text>
</comment>
<comment type="subunit">
    <text evidence="1">Homooligomer. Interacts with the replication enhancer protein (REn). Interacts with host retinoblastoma-related protein 1 (RBR1), and may thereby induce the transcription of host replicative enzymes even if the cell is not dividing anymore. Interacts with host PCNA. Interacts with host SCE1 protein (By similarity).</text>
</comment>
<comment type="subcellular location">
    <subcellularLocation>
        <location evidence="1">Host nucleus</location>
    </subcellularLocation>
</comment>
<comment type="domain">
    <text evidence="1">There are 3 rolling circle replication (RCR) motifs. RCR-2 is probably involved in metal coordination. RCR-3 is required for phosphodiester bond cleavage for initiation of RCR (By similarity).</text>
</comment>
<comment type="similarity">
    <text evidence="4">Belongs to the geminiviridae Rep protein family.</text>
</comment>
<sequence>MAPPNKFRINAKNYFLTYPHCSLTKEEALSQIKTLETPVNKLFIRICRELHEDGSPHLHVLIQFEGKFQCKNQRFFDLTSPHRSAHFHPNIQGAKSSTDVKSYMEKDGDVLDHGVFQIDGRSARGGCQSANDAYAEAINSGSKASALNILREKAPKDFVLQFHNLNSNLDRIFTPPIVEYISPFSSSSFDQVPEELDEWAVDNVVSAAARPLRPVSIVIEGDSRTGKTMWARSLGPHNYLCGHLDLSPKVYSNDAWFNVIDDVDPHYLKHFKEFMGAQRDWQSNTKYGKPVQIKGGIPTIFLCNPGPNSSYKEYLEEEKNSALRNWAVKNAIFVSLNGPLYSGSYQGATPNRQEDNQTTTG</sequence>
<accession>Q9DXE5</accession>
<gene>
    <name type="ORF">C1</name>
</gene>
<feature type="chain" id="PRO_0000312152" description="Replication-associated protein">
    <location>
        <begin position="1"/>
        <end position="361"/>
    </location>
</feature>
<feature type="domain" description="CRESS-DNA virus Rep endonuclease" evidence="3">
    <location>
        <begin position="8"/>
        <end position="116"/>
    </location>
</feature>
<feature type="region of interest" description="Binding to RBR1" evidence="1">
    <location>
        <begin position="143"/>
        <end position="153"/>
    </location>
</feature>
<feature type="region of interest" description="Oligomerization" evidence="1">
    <location>
        <begin position="156"/>
        <end position="176"/>
    </location>
</feature>
<feature type="short sequence motif" description="RCR-1" evidence="3">
    <location>
        <begin position="15"/>
        <end position="18"/>
    </location>
</feature>
<feature type="short sequence motif" description="RCR-2" evidence="3">
    <location>
        <begin position="57"/>
        <end position="59"/>
    </location>
</feature>
<feature type="short sequence motif" description="RCR-3" evidence="3">
    <location>
        <begin position="103"/>
        <end position="106"/>
    </location>
</feature>
<feature type="active site" description="For DNA cleavage activity" evidence="3">
    <location>
        <position position="103"/>
    </location>
</feature>
<feature type="binding site" evidence="3">
    <location>
        <position position="49"/>
    </location>
    <ligand>
        <name>a divalent metal cation</name>
        <dbReference type="ChEBI" id="CHEBI:60240"/>
    </ligand>
</feature>
<feature type="binding site" evidence="3">
    <location>
        <position position="57"/>
    </location>
    <ligand>
        <name>a divalent metal cation</name>
        <dbReference type="ChEBI" id="CHEBI:60240"/>
    </ligand>
</feature>
<feature type="binding site" evidence="3">
    <location>
        <position position="59"/>
    </location>
    <ligand>
        <name>a divalent metal cation</name>
        <dbReference type="ChEBI" id="CHEBI:60240"/>
    </ligand>
</feature>
<feature type="binding site" evidence="3">
    <location>
        <position position="107"/>
    </location>
    <ligand>
        <name>a divalent metal cation</name>
        <dbReference type="ChEBI" id="CHEBI:60240"/>
    </ligand>
</feature>
<feature type="binding site" evidence="2">
    <location>
        <begin position="221"/>
        <end position="228"/>
    </location>
    <ligand>
        <name>ATP</name>
        <dbReference type="ChEBI" id="CHEBI:30616"/>
    </ligand>
</feature>
<reference key="1">
    <citation type="journal article" date="2001" name="Virus Res.">
        <title>Tomato yellow leaf curl China virus: monopartite genome organization and agroinfection of plants.</title>
        <authorList>
            <person name="Yin Q."/>
            <person name="Yang H."/>
            <person name="Gong Q."/>
            <person name="Wang H."/>
            <person name="Liu Y."/>
            <person name="Hong Y."/>
            <person name="Tien P."/>
        </authorList>
    </citation>
    <scope>NUCLEOTIDE SEQUENCE [GENOMIC DNA]</scope>
    <source>
        <strain>Isolate CHI</strain>
    </source>
</reference>
<organismHost>
    <name type="scientific">Nicotiana tabacum</name>
    <name type="common">Common tobacco</name>
    <dbReference type="NCBI Taxonomy" id="4097"/>
</organismHost>
<organismHost>
    <name type="scientific">Sigesbeckia orientalis</name>
    <dbReference type="NCBI Taxonomy" id="185191"/>
</organismHost>
<organismHost>
    <name type="scientific">Solanum lycopersicum</name>
    <name type="common">Tomato</name>
    <name type="synonym">Lycopersicon esculentum</name>
    <dbReference type="NCBI Taxonomy" id="4081"/>
</organismHost>
<dbReference type="EC" id="2.7.7.-"/>
<dbReference type="EC" id="3.1.21.-"/>
<dbReference type="EMBL" id="AF311734">
    <property type="protein sequence ID" value="AAG27475.1"/>
    <property type="molecule type" value="Genomic_DNA"/>
</dbReference>
<dbReference type="SMR" id="Q9DXE5"/>
<dbReference type="KEGG" id="vg:949228"/>
<dbReference type="OrthoDB" id="9195at10239"/>
<dbReference type="Proteomes" id="UP000008267">
    <property type="component" value="Genome"/>
</dbReference>
<dbReference type="GO" id="GO:0042025">
    <property type="term" value="C:host cell nucleus"/>
    <property type="evidence" value="ECO:0007669"/>
    <property type="project" value="UniProtKB-SubCell"/>
</dbReference>
<dbReference type="GO" id="GO:0005524">
    <property type="term" value="F:ATP binding"/>
    <property type="evidence" value="ECO:0007669"/>
    <property type="project" value="UniProtKB-KW"/>
</dbReference>
<dbReference type="GO" id="GO:0003677">
    <property type="term" value="F:DNA binding"/>
    <property type="evidence" value="ECO:0007669"/>
    <property type="project" value="UniProtKB-KW"/>
</dbReference>
<dbReference type="GO" id="GO:0016888">
    <property type="term" value="F:endodeoxyribonuclease activity, producing 5'-phosphomonoesters"/>
    <property type="evidence" value="ECO:0007669"/>
    <property type="project" value="InterPro"/>
</dbReference>
<dbReference type="GO" id="GO:0004386">
    <property type="term" value="F:helicase activity"/>
    <property type="evidence" value="ECO:0007669"/>
    <property type="project" value="UniProtKB-KW"/>
</dbReference>
<dbReference type="GO" id="GO:0046872">
    <property type="term" value="F:metal ion binding"/>
    <property type="evidence" value="ECO:0007669"/>
    <property type="project" value="UniProtKB-KW"/>
</dbReference>
<dbReference type="GO" id="GO:0016779">
    <property type="term" value="F:nucleotidyltransferase activity"/>
    <property type="evidence" value="ECO:0007669"/>
    <property type="project" value="UniProtKB-KW"/>
</dbReference>
<dbReference type="GO" id="GO:0005198">
    <property type="term" value="F:structural molecule activity"/>
    <property type="evidence" value="ECO:0007669"/>
    <property type="project" value="InterPro"/>
</dbReference>
<dbReference type="GO" id="GO:0006260">
    <property type="term" value="P:DNA replication"/>
    <property type="evidence" value="ECO:0007669"/>
    <property type="project" value="UniProtKB-KW"/>
</dbReference>
<dbReference type="FunFam" id="3.40.1310.20:FF:000001">
    <property type="entry name" value="Replication-associated protein"/>
    <property type="match status" value="1"/>
</dbReference>
<dbReference type="Gene3D" id="3.40.1310.20">
    <property type="match status" value="1"/>
</dbReference>
<dbReference type="InterPro" id="IPR049912">
    <property type="entry name" value="CRESS_DNA_REP"/>
</dbReference>
<dbReference type="InterPro" id="IPR001301">
    <property type="entry name" value="Gemini_AL1_CLV"/>
</dbReference>
<dbReference type="InterPro" id="IPR001191">
    <property type="entry name" value="Gemini_AL1_REP"/>
</dbReference>
<dbReference type="InterPro" id="IPR022692">
    <property type="entry name" value="Gemini_AL1_REP_central"/>
</dbReference>
<dbReference type="Pfam" id="PF00799">
    <property type="entry name" value="Gemini_AL1"/>
    <property type="match status" value="1"/>
</dbReference>
<dbReference type="Pfam" id="PF08283">
    <property type="entry name" value="Gemini_AL1_M"/>
    <property type="match status" value="1"/>
</dbReference>
<dbReference type="PRINTS" id="PR00227">
    <property type="entry name" value="GEMCOATAL1"/>
</dbReference>
<dbReference type="PRINTS" id="PR00228">
    <property type="entry name" value="GEMCOATCLVL1"/>
</dbReference>
<dbReference type="SUPFAM" id="SSF55464">
    <property type="entry name" value="Origin of replication-binding domain, RBD-like"/>
    <property type="match status" value="1"/>
</dbReference>
<dbReference type="PROSITE" id="PS52020">
    <property type="entry name" value="CRESS_DNA_REP"/>
    <property type="match status" value="1"/>
</dbReference>
<evidence type="ECO:0000250" key="1"/>
<evidence type="ECO:0000255" key="2"/>
<evidence type="ECO:0000255" key="3">
    <source>
        <dbReference type="PROSITE-ProRule" id="PRU01364"/>
    </source>
</evidence>
<evidence type="ECO:0000305" key="4"/>
<protein>
    <recommendedName>
        <fullName>Replication-associated protein</fullName>
        <shortName>Rep</shortName>
        <ecNumber>2.7.7.-</ecNumber>
        <ecNumber>3.1.21.-</ecNumber>
    </recommendedName>
    <alternativeName>
        <fullName>Protein C1</fullName>
    </alternativeName>
</protein>
<keyword id="KW-0067">ATP-binding</keyword>
<keyword id="KW-0190">Covalent protein-DNA linkage</keyword>
<keyword id="KW-0235">DNA replication</keyword>
<keyword id="KW-0238">DNA-binding</keyword>
<keyword id="KW-0255">Endonuclease</keyword>
<keyword id="KW-0347">Helicase</keyword>
<keyword id="KW-1048">Host nucleus</keyword>
<keyword id="KW-0945">Host-virus interaction</keyword>
<keyword id="KW-0378">Hydrolase</keyword>
<keyword id="KW-0479">Metal-binding</keyword>
<keyword id="KW-0511">Multifunctional enzyme</keyword>
<keyword id="KW-0540">Nuclease</keyword>
<keyword id="KW-0547">Nucleotide-binding</keyword>
<keyword id="KW-0548">Nucleotidyltransferase</keyword>
<keyword id="KW-1185">Reference proteome</keyword>
<keyword id="KW-0808">Transferase</keyword>